<proteinExistence type="inferred from homology"/>
<sequence length="394" mass="42938">MAKEKFERSKPHVNVGTIGHVDHGKTTLTAALTTILAKKFGGAAKAYDQIDNAPEEKARGITINTSHVEYETETRHYAHVDCPGHADYVKNMITGAAQMDGAILVCSAADGPMPQTREHILLARQVGVPYIIVFMNKCDMVDDAELLELVEMEIRDLLSSYDFPGDDCPIVQGSALKALEGDAAYEEKIFELATALDSYIPTPERAVDKPFLLPIEDVFSISGRGTVVTGRVERGIIHVGDEIEIVGLKETQKTTCTGVEMFRKLLDEGQAGDNVGVLLRGTKREDVERGQVLAKPGTITPHTKFKAEVYVLSKEEGGRHTPFFANYRPQFYFRTTDVTGAVTLEKGVEMVMPGENVTITVELIAPIAMEEGLRFAIREGGRTVGAGVVSSVIA</sequence>
<accession>Q5F5Q8</accession>
<dbReference type="EC" id="3.6.5.3" evidence="2"/>
<dbReference type="EMBL" id="AE004969">
    <property type="protein sequence ID" value="AAW90463.1"/>
    <property type="molecule type" value="Genomic_DNA"/>
</dbReference>
<dbReference type="EMBL" id="AE004969">
    <property type="protein sequence ID" value="AAW90479.1"/>
    <property type="molecule type" value="Genomic_DNA"/>
</dbReference>
<dbReference type="RefSeq" id="YP_208875.1">
    <property type="nucleotide sequence ID" value="NC_002946.2"/>
</dbReference>
<dbReference type="RefSeq" id="YP_208891.1">
    <property type="nucleotide sequence ID" value="NC_002946.2"/>
</dbReference>
<dbReference type="SMR" id="Q5F5Q8"/>
<dbReference type="STRING" id="242231.NGO_1842"/>
<dbReference type="KEGG" id="ngo:NGO_1842"/>
<dbReference type="KEGG" id="ngo:NGO_1858"/>
<dbReference type="PATRIC" id="fig|242231.10.peg.2214"/>
<dbReference type="HOGENOM" id="CLU_007265_0_1_4"/>
<dbReference type="Proteomes" id="UP000000535">
    <property type="component" value="Chromosome"/>
</dbReference>
<dbReference type="GO" id="GO:0005829">
    <property type="term" value="C:cytosol"/>
    <property type="evidence" value="ECO:0007669"/>
    <property type="project" value="TreeGrafter"/>
</dbReference>
<dbReference type="GO" id="GO:0005525">
    <property type="term" value="F:GTP binding"/>
    <property type="evidence" value="ECO:0007669"/>
    <property type="project" value="UniProtKB-UniRule"/>
</dbReference>
<dbReference type="GO" id="GO:0003924">
    <property type="term" value="F:GTPase activity"/>
    <property type="evidence" value="ECO:0007669"/>
    <property type="project" value="InterPro"/>
</dbReference>
<dbReference type="GO" id="GO:0097216">
    <property type="term" value="F:guanosine tetraphosphate binding"/>
    <property type="evidence" value="ECO:0007669"/>
    <property type="project" value="UniProtKB-ARBA"/>
</dbReference>
<dbReference type="GO" id="GO:0003746">
    <property type="term" value="F:translation elongation factor activity"/>
    <property type="evidence" value="ECO:0007669"/>
    <property type="project" value="UniProtKB-UniRule"/>
</dbReference>
<dbReference type="CDD" id="cd01884">
    <property type="entry name" value="EF_Tu"/>
    <property type="match status" value="1"/>
</dbReference>
<dbReference type="CDD" id="cd03697">
    <property type="entry name" value="EFTU_II"/>
    <property type="match status" value="1"/>
</dbReference>
<dbReference type="CDD" id="cd03707">
    <property type="entry name" value="EFTU_III"/>
    <property type="match status" value="1"/>
</dbReference>
<dbReference type="FunFam" id="2.40.30.10:FF:000001">
    <property type="entry name" value="Elongation factor Tu"/>
    <property type="match status" value="1"/>
</dbReference>
<dbReference type="FunFam" id="3.40.50.300:FF:000003">
    <property type="entry name" value="Elongation factor Tu"/>
    <property type="match status" value="1"/>
</dbReference>
<dbReference type="Gene3D" id="3.40.50.300">
    <property type="entry name" value="P-loop containing nucleotide triphosphate hydrolases"/>
    <property type="match status" value="1"/>
</dbReference>
<dbReference type="Gene3D" id="2.40.30.10">
    <property type="entry name" value="Translation factors"/>
    <property type="match status" value="2"/>
</dbReference>
<dbReference type="HAMAP" id="MF_00118_B">
    <property type="entry name" value="EF_Tu_B"/>
    <property type="match status" value="1"/>
</dbReference>
<dbReference type="InterPro" id="IPR041709">
    <property type="entry name" value="EF-Tu_GTP-bd"/>
</dbReference>
<dbReference type="InterPro" id="IPR050055">
    <property type="entry name" value="EF-Tu_GTPase"/>
</dbReference>
<dbReference type="InterPro" id="IPR004161">
    <property type="entry name" value="EFTu-like_2"/>
</dbReference>
<dbReference type="InterPro" id="IPR033720">
    <property type="entry name" value="EFTU_2"/>
</dbReference>
<dbReference type="InterPro" id="IPR031157">
    <property type="entry name" value="G_TR_CS"/>
</dbReference>
<dbReference type="InterPro" id="IPR027417">
    <property type="entry name" value="P-loop_NTPase"/>
</dbReference>
<dbReference type="InterPro" id="IPR005225">
    <property type="entry name" value="Small_GTP-bd"/>
</dbReference>
<dbReference type="InterPro" id="IPR000795">
    <property type="entry name" value="T_Tr_GTP-bd_dom"/>
</dbReference>
<dbReference type="InterPro" id="IPR009000">
    <property type="entry name" value="Transl_B-barrel_sf"/>
</dbReference>
<dbReference type="InterPro" id="IPR009001">
    <property type="entry name" value="Transl_elong_EF1A/Init_IF2_C"/>
</dbReference>
<dbReference type="InterPro" id="IPR004541">
    <property type="entry name" value="Transl_elong_EFTu/EF1A_bac/org"/>
</dbReference>
<dbReference type="InterPro" id="IPR004160">
    <property type="entry name" value="Transl_elong_EFTu/EF1A_C"/>
</dbReference>
<dbReference type="NCBIfam" id="TIGR00485">
    <property type="entry name" value="EF-Tu"/>
    <property type="match status" value="1"/>
</dbReference>
<dbReference type="NCBIfam" id="NF000766">
    <property type="entry name" value="PRK00049.1"/>
    <property type="match status" value="1"/>
</dbReference>
<dbReference type="NCBIfam" id="NF009372">
    <property type="entry name" value="PRK12735.1"/>
    <property type="match status" value="1"/>
</dbReference>
<dbReference type="NCBIfam" id="NF009373">
    <property type="entry name" value="PRK12736.1"/>
    <property type="match status" value="1"/>
</dbReference>
<dbReference type="NCBIfam" id="TIGR00231">
    <property type="entry name" value="small_GTP"/>
    <property type="match status" value="1"/>
</dbReference>
<dbReference type="PANTHER" id="PTHR43721:SF22">
    <property type="entry name" value="ELONGATION FACTOR TU, MITOCHONDRIAL"/>
    <property type="match status" value="1"/>
</dbReference>
<dbReference type="PANTHER" id="PTHR43721">
    <property type="entry name" value="ELONGATION FACTOR TU-RELATED"/>
    <property type="match status" value="1"/>
</dbReference>
<dbReference type="Pfam" id="PF00009">
    <property type="entry name" value="GTP_EFTU"/>
    <property type="match status" value="1"/>
</dbReference>
<dbReference type="Pfam" id="PF03144">
    <property type="entry name" value="GTP_EFTU_D2"/>
    <property type="match status" value="1"/>
</dbReference>
<dbReference type="Pfam" id="PF03143">
    <property type="entry name" value="GTP_EFTU_D3"/>
    <property type="match status" value="1"/>
</dbReference>
<dbReference type="PRINTS" id="PR00315">
    <property type="entry name" value="ELONGATNFCT"/>
</dbReference>
<dbReference type="SUPFAM" id="SSF50465">
    <property type="entry name" value="EF-Tu/eEF-1alpha/eIF2-gamma C-terminal domain"/>
    <property type="match status" value="1"/>
</dbReference>
<dbReference type="SUPFAM" id="SSF52540">
    <property type="entry name" value="P-loop containing nucleoside triphosphate hydrolases"/>
    <property type="match status" value="1"/>
</dbReference>
<dbReference type="SUPFAM" id="SSF50447">
    <property type="entry name" value="Translation proteins"/>
    <property type="match status" value="1"/>
</dbReference>
<dbReference type="PROSITE" id="PS00301">
    <property type="entry name" value="G_TR_1"/>
    <property type="match status" value="1"/>
</dbReference>
<dbReference type="PROSITE" id="PS51722">
    <property type="entry name" value="G_TR_2"/>
    <property type="match status" value="1"/>
</dbReference>
<feature type="chain" id="PRO_0000337440" description="Elongation factor Tu">
    <location>
        <begin position="1"/>
        <end position="394"/>
    </location>
</feature>
<feature type="domain" description="tr-type G">
    <location>
        <begin position="10"/>
        <end position="204"/>
    </location>
</feature>
<feature type="region of interest" description="G1" evidence="1">
    <location>
        <begin position="19"/>
        <end position="26"/>
    </location>
</feature>
<feature type="region of interest" description="G2" evidence="1">
    <location>
        <begin position="60"/>
        <end position="64"/>
    </location>
</feature>
<feature type="region of interest" description="G3" evidence="1">
    <location>
        <begin position="81"/>
        <end position="84"/>
    </location>
</feature>
<feature type="region of interest" description="G4" evidence="1">
    <location>
        <begin position="136"/>
        <end position="139"/>
    </location>
</feature>
<feature type="region of interest" description="G5" evidence="1">
    <location>
        <begin position="174"/>
        <end position="176"/>
    </location>
</feature>
<feature type="binding site" evidence="2">
    <location>
        <begin position="19"/>
        <end position="26"/>
    </location>
    <ligand>
        <name>GTP</name>
        <dbReference type="ChEBI" id="CHEBI:37565"/>
    </ligand>
</feature>
<feature type="binding site" evidence="2">
    <location>
        <position position="26"/>
    </location>
    <ligand>
        <name>Mg(2+)</name>
        <dbReference type="ChEBI" id="CHEBI:18420"/>
    </ligand>
</feature>
<feature type="binding site" evidence="2">
    <location>
        <begin position="81"/>
        <end position="85"/>
    </location>
    <ligand>
        <name>GTP</name>
        <dbReference type="ChEBI" id="CHEBI:37565"/>
    </ligand>
</feature>
<feature type="binding site" evidence="2">
    <location>
        <begin position="136"/>
        <end position="139"/>
    </location>
    <ligand>
        <name>GTP</name>
        <dbReference type="ChEBI" id="CHEBI:37565"/>
    </ligand>
</feature>
<name>EFTU_NEIG1</name>
<gene>
    <name evidence="2" type="primary">tuf1</name>
    <name type="ordered locus">NGO_1842</name>
</gene>
<gene>
    <name evidence="2" type="primary">tuf2</name>
    <name type="ordered locus">NGO_1858</name>
</gene>
<protein>
    <recommendedName>
        <fullName evidence="2">Elongation factor Tu</fullName>
        <shortName evidence="2">EF-Tu</shortName>
        <ecNumber evidence="2">3.6.5.3</ecNumber>
    </recommendedName>
</protein>
<organism>
    <name type="scientific">Neisseria gonorrhoeae (strain ATCC 700825 / FA 1090)</name>
    <dbReference type="NCBI Taxonomy" id="242231"/>
    <lineage>
        <taxon>Bacteria</taxon>
        <taxon>Pseudomonadati</taxon>
        <taxon>Pseudomonadota</taxon>
        <taxon>Betaproteobacteria</taxon>
        <taxon>Neisseriales</taxon>
        <taxon>Neisseriaceae</taxon>
        <taxon>Neisseria</taxon>
    </lineage>
</organism>
<evidence type="ECO:0000250" key="1"/>
<evidence type="ECO:0000255" key="2">
    <source>
        <dbReference type="HAMAP-Rule" id="MF_00118"/>
    </source>
</evidence>
<reference key="1">
    <citation type="submission" date="2003-03" db="EMBL/GenBank/DDBJ databases">
        <title>The complete genome sequence of Neisseria gonorrhoeae.</title>
        <authorList>
            <person name="Lewis L.A."/>
            <person name="Gillaspy A.F."/>
            <person name="McLaughlin R.E."/>
            <person name="Gipson M."/>
            <person name="Ducey T.F."/>
            <person name="Ownbey T."/>
            <person name="Hartman K."/>
            <person name="Nydick C."/>
            <person name="Carson M.B."/>
            <person name="Vaughn J."/>
            <person name="Thomson C."/>
            <person name="Song L."/>
            <person name="Lin S."/>
            <person name="Yuan X."/>
            <person name="Najar F."/>
            <person name="Zhan M."/>
            <person name="Ren Q."/>
            <person name="Zhu H."/>
            <person name="Qi S."/>
            <person name="Kenton S.M."/>
            <person name="Lai H."/>
            <person name="White J.D."/>
            <person name="Clifton S."/>
            <person name="Roe B.A."/>
            <person name="Dyer D.W."/>
        </authorList>
    </citation>
    <scope>NUCLEOTIDE SEQUENCE [LARGE SCALE GENOMIC DNA]</scope>
    <source>
        <strain>ATCC 700825 / FA 1090</strain>
    </source>
</reference>
<comment type="function">
    <text evidence="2">GTP hydrolase that promotes the GTP-dependent binding of aminoacyl-tRNA to the A-site of ribosomes during protein biosynthesis.</text>
</comment>
<comment type="catalytic activity">
    <reaction evidence="2">
        <text>GTP + H2O = GDP + phosphate + H(+)</text>
        <dbReference type="Rhea" id="RHEA:19669"/>
        <dbReference type="ChEBI" id="CHEBI:15377"/>
        <dbReference type="ChEBI" id="CHEBI:15378"/>
        <dbReference type="ChEBI" id="CHEBI:37565"/>
        <dbReference type="ChEBI" id="CHEBI:43474"/>
        <dbReference type="ChEBI" id="CHEBI:58189"/>
        <dbReference type="EC" id="3.6.5.3"/>
    </reaction>
    <physiologicalReaction direction="left-to-right" evidence="2">
        <dbReference type="Rhea" id="RHEA:19670"/>
    </physiologicalReaction>
</comment>
<comment type="subunit">
    <text evidence="2">Monomer.</text>
</comment>
<comment type="subcellular location">
    <subcellularLocation>
        <location evidence="2">Cytoplasm</location>
    </subcellularLocation>
</comment>
<comment type="similarity">
    <text evidence="2">Belongs to the TRAFAC class translation factor GTPase superfamily. Classic translation factor GTPase family. EF-Tu/EF-1A subfamily.</text>
</comment>
<keyword id="KW-0963">Cytoplasm</keyword>
<keyword id="KW-0251">Elongation factor</keyword>
<keyword id="KW-0342">GTP-binding</keyword>
<keyword id="KW-0378">Hydrolase</keyword>
<keyword id="KW-0460">Magnesium</keyword>
<keyword id="KW-0479">Metal-binding</keyword>
<keyword id="KW-0547">Nucleotide-binding</keyword>
<keyword id="KW-0648">Protein biosynthesis</keyword>
<keyword id="KW-1185">Reference proteome</keyword>